<evidence type="ECO:0000250" key="1"/>
<evidence type="ECO:0000250" key="2">
    <source>
        <dbReference type="UniProtKB" id="P05387"/>
    </source>
</evidence>
<evidence type="ECO:0000256" key="3">
    <source>
        <dbReference type="SAM" id="MobiDB-lite"/>
    </source>
</evidence>
<evidence type="ECO:0000305" key="4"/>
<evidence type="ECO:0007744" key="5">
    <source>
    </source>
</evidence>
<evidence type="ECO:0007744" key="6">
    <source>
    </source>
</evidence>
<evidence type="ECO:0007744" key="7">
    <source>
    </source>
</evidence>
<evidence type="ECO:0007744" key="8">
    <source>
    </source>
</evidence>
<evidence type="ECO:0007744" key="9">
    <source>
    </source>
</evidence>
<evidence type="ECO:0007744" key="10">
    <source>
    </source>
</evidence>
<accession>P99027</accession>
<accession>Q3TKY3</accession>
<accession>Q9CQ99</accession>
<accession>Q9CZJ8</accession>
<gene>
    <name type="primary">Rplp2</name>
</gene>
<reference key="1">
    <citation type="journal article" date="2005" name="Science">
        <title>The transcriptional landscape of the mammalian genome.</title>
        <authorList>
            <person name="Carninci P."/>
            <person name="Kasukawa T."/>
            <person name="Katayama S."/>
            <person name="Gough J."/>
            <person name="Frith M.C."/>
            <person name="Maeda N."/>
            <person name="Oyama R."/>
            <person name="Ravasi T."/>
            <person name="Lenhard B."/>
            <person name="Wells C."/>
            <person name="Kodzius R."/>
            <person name="Shimokawa K."/>
            <person name="Bajic V.B."/>
            <person name="Brenner S.E."/>
            <person name="Batalov S."/>
            <person name="Forrest A.R."/>
            <person name="Zavolan M."/>
            <person name="Davis M.J."/>
            <person name="Wilming L.G."/>
            <person name="Aidinis V."/>
            <person name="Allen J.E."/>
            <person name="Ambesi-Impiombato A."/>
            <person name="Apweiler R."/>
            <person name="Aturaliya R.N."/>
            <person name="Bailey T.L."/>
            <person name="Bansal M."/>
            <person name="Baxter L."/>
            <person name="Beisel K.W."/>
            <person name="Bersano T."/>
            <person name="Bono H."/>
            <person name="Chalk A.M."/>
            <person name="Chiu K.P."/>
            <person name="Choudhary V."/>
            <person name="Christoffels A."/>
            <person name="Clutterbuck D.R."/>
            <person name="Crowe M.L."/>
            <person name="Dalla E."/>
            <person name="Dalrymple B.P."/>
            <person name="de Bono B."/>
            <person name="Della Gatta G."/>
            <person name="di Bernardo D."/>
            <person name="Down T."/>
            <person name="Engstrom P."/>
            <person name="Fagiolini M."/>
            <person name="Faulkner G."/>
            <person name="Fletcher C.F."/>
            <person name="Fukushima T."/>
            <person name="Furuno M."/>
            <person name="Futaki S."/>
            <person name="Gariboldi M."/>
            <person name="Georgii-Hemming P."/>
            <person name="Gingeras T.R."/>
            <person name="Gojobori T."/>
            <person name="Green R.E."/>
            <person name="Gustincich S."/>
            <person name="Harbers M."/>
            <person name="Hayashi Y."/>
            <person name="Hensch T.K."/>
            <person name="Hirokawa N."/>
            <person name="Hill D."/>
            <person name="Huminiecki L."/>
            <person name="Iacono M."/>
            <person name="Ikeo K."/>
            <person name="Iwama A."/>
            <person name="Ishikawa T."/>
            <person name="Jakt M."/>
            <person name="Kanapin A."/>
            <person name="Katoh M."/>
            <person name="Kawasawa Y."/>
            <person name="Kelso J."/>
            <person name="Kitamura H."/>
            <person name="Kitano H."/>
            <person name="Kollias G."/>
            <person name="Krishnan S.P."/>
            <person name="Kruger A."/>
            <person name="Kummerfeld S.K."/>
            <person name="Kurochkin I.V."/>
            <person name="Lareau L.F."/>
            <person name="Lazarevic D."/>
            <person name="Lipovich L."/>
            <person name="Liu J."/>
            <person name="Liuni S."/>
            <person name="McWilliam S."/>
            <person name="Madan Babu M."/>
            <person name="Madera M."/>
            <person name="Marchionni L."/>
            <person name="Matsuda H."/>
            <person name="Matsuzawa S."/>
            <person name="Miki H."/>
            <person name="Mignone F."/>
            <person name="Miyake S."/>
            <person name="Morris K."/>
            <person name="Mottagui-Tabar S."/>
            <person name="Mulder N."/>
            <person name="Nakano N."/>
            <person name="Nakauchi H."/>
            <person name="Ng P."/>
            <person name="Nilsson R."/>
            <person name="Nishiguchi S."/>
            <person name="Nishikawa S."/>
            <person name="Nori F."/>
            <person name="Ohara O."/>
            <person name="Okazaki Y."/>
            <person name="Orlando V."/>
            <person name="Pang K.C."/>
            <person name="Pavan W.J."/>
            <person name="Pavesi G."/>
            <person name="Pesole G."/>
            <person name="Petrovsky N."/>
            <person name="Piazza S."/>
            <person name="Reed J."/>
            <person name="Reid J.F."/>
            <person name="Ring B.Z."/>
            <person name="Ringwald M."/>
            <person name="Rost B."/>
            <person name="Ruan Y."/>
            <person name="Salzberg S.L."/>
            <person name="Sandelin A."/>
            <person name="Schneider C."/>
            <person name="Schoenbach C."/>
            <person name="Sekiguchi K."/>
            <person name="Semple C.A."/>
            <person name="Seno S."/>
            <person name="Sessa L."/>
            <person name="Sheng Y."/>
            <person name="Shibata Y."/>
            <person name="Shimada H."/>
            <person name="Shimada K."/>
            <person name="Silva D."/>
            <person name="Sinclair B."/>
            <person name="Sperling S."/>
            <person name="Stupka E."/>
            <person name="Sugiura K."/>
            <person name="Sultana R."/>
            <person name="Takenaka Y."/>
            <person name="Taki K."/>
            <person name="Tammoja K."/>
            <person name="Tan S.L."/>
            <person name="Tang S."/>
            <person name="Taylor M.S."/>
            <person name="Tegner J."/>
            <person name="Teichmann S.A."/>
            <person name="Ueda H.R."/>
            <person name="van Nimwegen E."/>
            <person name="Verardo R."/>
            <person name="Wei C.L."/>
            <person name="Yagi K."/>
            <person name="Yamanishi H."/>
            <person name="Zabarovsky E."/>
            <person name="Zhu S."/>
            <person name="Zimmer A."/>
            <person name="Hide W."/>
            <person name="Bult C."/>
            <person name="Grimmond S.M."/>
            <person name="Teasdale R.D."/>
            <person name="Liu E.T."/>
            <person name="Brusic V."/>
            <person name="Quackenbush J."/>
            <person name="Wahlestedt C."/>
            <person name="Mattick J.S."/>
            <person name="Hume D.A."/>
            <person name="Kai C."/>
            <person name="Sasaki D."/>
            <person name="Tomaru Y."/>
            <person name="Fukuda S."/>
            <person name="Kanamori-Katayama M."/>
            <person name="Suzuki M."/>
            <person name="Aoki J."/>
            <person name="Arakawa T."/>
            <person name="Iida J."/>
            <person name="Imamura K."/>
            <person name="Itoh M."/>
            <person name="Kato T."/>
            <person name="Kawaji H."/>
            <person name="Kawagashira N."/>
            <person name="Kawashima T."/>
            <person name="Kojima M."/>
            <person name="Kondo S."/>
            <person name="Konno H."/>
            <person name="Nakano K."/>
            <person name="Ninomiya N."/>
            <person name="Nishio T."/>
            <person name="Okada M."/>
            <person name="Plessy C."/>
            <person name="Shibata K."/>
            <person name="Shiraki T."/>
            <person name="Suzuki S."/>
            <person name="Tagami M."/>
            <person name="Waki K."/>
            <person name="Watahiki A."/>
            <person name="Okamura-Oho Y."/>
            <person name="Suzuki H."/>
            <person name="Kawai J."/>
            <person name="Hayashizaki Y."/>
        </authorList>
    </citation>
    <scope>NUCLEOTIDE SEQUENCE [LARGE SCALE MRNA]</scope>
    <source>
        <strain>C57BL/6J</strain>
        <tissue>Embryo</tissue>
        <tissue>Head</tissue>
        <tissue>Thymus</tissue>
    </source>
</reference>
<reference key="2">
    <citation type="journal article" date="2004" name="Genome Res.">
        <title>The status, quality, and expansion of the NIH full-length cDNA project: the Mammalian Gene Collection (MGC).</title>
        <authorList>
            <consortium name="The MGC Project Team"/>
        </authorList>
    </citation>
    <scope>NUCLEOTIDE SEQUENCE [LARGE SCALE MRNA]</scope>
</reference>
<reference key="3">
    <citation type="submission" date="1998-08" db="UniProtKB">
        <authorList>
            <person name="Sanchez J.-C."/>
            <person name="Rouge V."/>
            <person name="Frutiger S."/>
            <person name="Hughes G."/>
            <person name="Yan J.X."/>
            <person name="Hoogland C."/>
            <person name="Appel R.D."/>
            <person name="Binz P.-A."/>
            <person name="Hochstrasser D.F."/>
            <person name="Cowthorne M."/>
        </authorList>
    </citation>
    <scope>PROTEIN SEQUENCE OF 1-10</scope>
    <source>
        <tissue>Liver</tissue>
    </source>
</reference>
<reference key="4">
    <citation type="journal article" date="2004" name="Mol. Cell. Proteomics">
        <title>Phosphoproteomic analysis of the developing mouse brain.</title>
        <authorList>
            <person name="Ballif B.A."/>
            <person name="Villen J."/>
            <person name="Beausoleil S.A."/>
            <person name="Schwartz D."/>
            <person name="Gygi S.P."/>
        </authorList>
    </citation>
    <scope>PHOSPHORYLATION [LARGE SCALE ANALYSIS] AT SER-102 AND SER-105</scope>
    <scope>IDENTIFICATION BY MASS SPECTROMETRY [LARGE SCALE ANALYSIS]</scope>
    <source>
        <tissue>Embryonic brain</tissue>
    </source>
</reference>
<reference key="5">
    <citation type="journal article" date="2007" name="Proc. Natl. Acad. Sci. U.S.A.">
        <title>Large-scale phosphorylation analysis of mouse liver.</title>
        <authorList>
            <person name="Villen J."/>
            <person name="Beausoleil S.A."/>
            <person name="Gerber S.A."/>
            <person name="Gygi S.P."/>
        </authorList>
    </citation>
    <scope>PHOSPHORYLATION [LARGE SCALE ANALYSIS] AT SER-102 AND SER-105</scope>
    <scope>IDENTIFICATION BY MASS SPECTROMETRY [LARGE SCALE ANALYSIS]</scope>
    <source>
        <tissue>Liver</tissue>
    </source>
</reference>
<reference key="6">
    <citation type="journal article" date="2008" name="J. Proteome Res.">
        <title>Specific phosphopeptide enrichment with immobilized titanium ion affinity chromatography adsorbent for phosphoproteome analysis.</title>
        <authorList>
            <person name="Zhou H."/>
            <person name="Ye M."/>
            <person name="Dong J."/>
            <person name="Han G."/>
            <person name="Jiang X."/>
            <person name="Wu R."/>
            <person name="Zou H."/>
        </authorList>
    </citation>
    <scope>IDENTIFICATION BY MASS SPECTROMETRY [LARGE SCALE ANALYSIS]</scope>
    <source>
        <tissue>Liver</tissue>
    </source>
</reference>
<reference key="7">
    <citation type="journal article" date="2009" name="Immunity">
        <title>The phagosomal proteome in interferon-gamma-activated macrophages.</title>
        <authorList>
            <person name="Trost M."/>
            <person name="English L."/>
            <person name="Lemieux S."/>
            <person name="Courcelles M."/>
            <person name="Desjardins M."/>
            <person name="Thibault P."/>
        </authorList>
    </citation>
    <scope>PHOSPHORYLATION [LARGE SCALE ANALYSIS] AT SER-102 AND SER-105</scope>
    <scope>IDENTIFICATION BY MASS SPECTROMETRY [LARGE SCALE ANALYSIS]</scope>
</reference>
<reference key="8">
    <citation type="journal article" date="2009" name="Mol. Cell. Proteomics">
        <title>Large scale localization of protein phosphorylation by use of electron capture dissociation mass spectrometry.</title>
        <authorList>
            <person name="Sweet S.M."/>
            <person name="Bailey C.M."/>
            <person name="Cunningham D.L."/>
            <person name="Heath J.K."/>
            <person name="Cooper H.J."/>
        </authorList>
    </citation>
    <scope>PHOSPHORYLATION [LARGE SCALE ANALYSIS] AT SER-17; SER-102 AND SER-105</scope>
    <scope>IDENTIFICATION BY MASS SPECTROMETRY [LARGE SCALE ANALYSIS]</scope>
    <source>
        <tissue>Embryonic fibroblast</tissue>
    </source>
</reference>
<reference key="9">
    <citation type="journal article" date="2010" name="Cell">
        <title>A tissue-specific atlas of mouse protein phosphorylation and expression.</title>
        <authorList>
            <person name="Huttlin E.L."/>
            <person name="Jedrychowski M.P."/>
            <person name="Elias J.E."/>
            <person name="Goswami T."/>
            <person name="Rad R."/>
            <person name="Beausoleil S.A."/>
            <person name="Villen J."/>
            <person name="Haas W."/>
            <person name="Sowa M.E."/>
            <person name="Gygi S.P."/>
        </authorList>
    </citation>
    <scope>PHOSPHORYLATION [LARGE SCALE ANALYSIS] AT SER-17; SER-86; SER-102 AND SER-105</scope>
    <scope>IDENTIFICATION BY MASS SPECTROMETRY [LARGE SCALE ANALYSIS]</scope>
    <source>
        <tissue>Brain</tissue>
        <tissue>Brown adipose tissue</tissue>
        <tissue>Heart</tissue>
        <tissue>Kidney</tissue>
        <tissue>Liver</tissue>
        <tissue>Lung</tissue>
        <tissue>Pancreas</tissue>
        <tissue>Spleen</tissue>
        <tissue>Testis</tissue>
    </source>
</reference>
<reference key="10">
    <citation type="journal article" date="2013" name="Mol. Cell">
        <title>SIRT5-mediated lysine desuccinylation impacts diverse metabolic pathways.</title>
        <authorList>
            <person name="Park J."/>
            <person name="Chen Y."/>
            <person name="Tishkoff D.X."/>
            <person name="Peng C."/>
            <person name="Tan M."/>
            <person name="Dai L."/>
            <person name="Xie Z."/>
            <person name="Zhang Y."/>
            <person name="Zwaans B.M."/>
            <person name="Skinner M.E."/>
            <person name="Lombard D.B."/>
            <person name="Zhao Y."/>
        </authorList>
    </citation>
    <scope>ACETYLATION [LARGE SCALE ANALYSIS] AT LYS-21</scope>
    <scope>SUCCINYLATION [LARGE SCALE ANALYSIS] AT LYS-21</scope>
    <scope>IDENTIFICATION BY MASS SPECTROMETRY [LARGE SCALE ANALYSIS]</scope>
    <source>
        <tissue>Embryonic fibroblast</tissue>
        <tissue>Liver</tissue>
    </source>
</reference>
<protein>
    <recommendedName>
        <fullName evidence="4">Large ribosomal subunit protein P2</fullName>
    </recommendedName>
    <alternativeName>
        <fullName>60S acidic ribosomal protein P2</fullName>
    </alternativeName>
</protein>
<proteinExistence type="evidence at protein level"/>
<dbReference type="EMBL" id="AK002419">
    <property type="protein sequence ID" value="BAB22086.1"/>
    <property type="molecule type" value="mRNA"/>
</dbReference>
<dbReference type="EMBL" id="AK008344">
    <property type="protein sequence ID" value="BAB25616.1"/>
    <property type="molecule type" value="mRNA"/>
</dbReference>
<dbReference type="EMBL" id="AK010618">
    <property type="protein sequence ID" value="BAB27066.1"/>
    <property type="molecule type" value="mRNA"/>
</dbReference>
<dbReference type="EMBL" id="AK012402">
    <property type="protein sequence ID" value="BAB28217.1"/>
    <property type="molecule type" value="mRNA"/>
</dbReference>
<dbReference type="EMBL" id="AK012526">
    <property type="protein sequence ID" value="BAB28297.1"/>
    <property type="molecule type" value="mRNA"/>
</dbReference>
<dbReference type="EMBL" id="AK028140">
    <property type="protein sequence ID" value="BAC25768.1"/>
    <property type="molecule type" value="mRNA"/>
</dbReference>
<dbReference type="EMBL" id="AK028149">
    <property type="protein sequence ID" value="BAC25777.1"/>
    <property type="molecule type" value="mRNA"/>
</dbReference>
<dbReference type="EMBL" id="AK088737">
    <property type="protein sequence ID" value="BAC40539.1"/>
    <property type="molecule type" value="mRNA"/>
</dbReference>
<dbReference type="EMBL" id="AK134206">
    <property type="protein sequence ID" value="BAE22051.1"/>
    <property type="molecule type" value="mRNA"/>
</dbReference>
<dbReference type="EMBL" id="AK166774">
    <property type="protein sequence ID" value="BAE39010.1"/>
    <property type="molecule type" value="mRNA"/>
</dbReference>
<dbReference type="EMBL" id="BC012413">
    <property type="protein sequence ID" value="AAH12413.1"/>
    <property type="molecule type" value="mRNA"/>
</dbReference>
<dbReference type="CCDS" id="CCDS40187.1"/>
<dbReference type="RefSeq" id="NP_001347586.1">
    <property type="nucleotide sequence ID" value="NM_001360657.1"/>
</dbReference>
<dbReference type="RefSeq" id="NP_080296.3">
    <property type="nucleotide sequence ID" value="NM_026020.6"/>
</dbReference>
<dbReference type="RefSeq" id="XP_006536292.1">
    <property type="nucleotide sequence ID" value="XM_006536229.1"/>
</dbReference>
<dbReference type="BMRB" id="P99027"/>
<dbReference type="SMR" id="P99027"/>
<dbReference type="BioGRID" id="212002">
    <property type="interactions" value="104"/>
</dbReference>
<dbReference type="ComplexPortal" id="CPX-5262">
    <property type="entry name" value="60S cytosolic large ribosomal subunit"/>
</dbReference>
<dbReference type="ComplexPortal" id="CPX-7662">
    <property type="entry name" value="60S cytosolic large ribosomal subunit, testis-specific variant"/>
</dbReference>
<dbReference type="ComplexPortal" id="CPX-7663">
    <property type="entry name" value="60S cytosolic large ribosomal subunit, striated muscle variant"/>
</dbReference>
<dbReference type="FunCoup" id="P99027">
    <property type="interactions" value="1590"/>
</dbReference>
<dbReference type="IntAct" id="P99027">
    <property type="interactions" value="6"/>
</dbReference>
<dbReference type="MINT" id="P99027"/>
<dbReference type="STRING" id="10090.ENSMUSP00000081474"/>
<dbReference type="GlyGen" id="P99027">
    <property type="glycosylation" value="4 sites, 1 N-linked glycan (1 site), 1 O-linked glycan (3 sites)"/>
</dbReference>
<dbReference type="iPTMnet" id="P99027"/>
<dbReference type="PhosphoSitePlus" id="P99027"/>
<dbReference type="SwissPalm" id="P99027"/>
<dbReference type="REPRODUCTION-2DPAGE" id="IPI00139795"/>
<dbReference type="CPTAC" id="non-CPTAC-3668"/>
<dbReference type="jPOST" id="P99027"/>
<dbReference type="PaxDb" id="10090-ENSMUSP00000081474"/>
<dbReference type="PeptideAtlas" id="P99027"/>
<dbReference type="ProteomicsDB" id="300516"/>
<dbReference type="Pumba" id="P99027"/>
<dbReference type="TopDownProteomics" id="P99027"/>
<dbReference type="DNASU" id="67186"/>
<dbReference type="Ensembl" id="ENSMUST00000084434.11">
    <property type="protein sequence ID" value="ENSMUSP00000081474.5"/>
    <property type="gene ID" value="ENSMUSG00000025508.14"/>
</dbReference>
<dbReference type="Ensembl" id="ENSMUST00000106003.2">
    <property type="protein sequence ID" value="ENSMUSP00000101625.2"/>
    <property type="gene ID" value="ENSMUSG00000025508.14"/>
</dbReference>
<dbReference type="Ensembl" id="ENSMUST00000106004.8">
    <property type="protein sequence ID" value="ENSMUSP00000101626.2"/>
    <property type="gene ID" value="ENSMUSG00000025508.14"/>
</dbReference>
<dbReference type="GeneID" id="67186"/>
<dbReference type="KEGG" id="mmu:67186"/>
<dbReference type="UCSC" id="uc009klf.1">
    <property type="organism name" value="mouse"/>
</dbReference>
<dbReference type="AGR" id="MGI:1914436"/>
<dbReference type="CTD" id="6181"/>
<dbReference type="MGI" id="MGI:1914436">
    <property type="gene designation" value="Rplp2"/>
</dbReference>
<dbReference type="VEuPathDB" id="HostDB:ENSMUSG00000025508"/>
<dbReference type="eggNOG" id="KOG3449">
    <property type="taxonomic scope" value="Eukaryota"/>
</dbReference>
<dbReference type="GeneTree" id="ENSGT00550000074828"/>
<dbReference type="HOGENOM" id="CLU_114656_0_2_1"/>
<dbReference type="InParanoid" id="P99027"/>
<dbReference type="OMA" id="MKVIASY"/>
<dbReference type="OrthoDB" id="1227494at2759"/>
<dbReference type="PhylomeDB" id="P99027"/>
<dbReference type="TreeFam" id="TF320650"/>
<dbReference type="Reactome" id="R-MMU-156827">
    <property type="pathway name" value="L13a-mediated translational silencing of Ceruloplasmin expression"/>
</dbReference>
<dbReference type="Reactome" id="R-MMU-1799339">
    <property type="pathway name" value="SRP-dependent cotranslational protein targeting to membrane"/>
</dbReference>
<dbReference type="Reactome" id="R-MMU-6791226">
    <property type="pathway name" value="Major pathway of rRNA processing in the nucleolus and cytosol"/>
</dbReference>
<dbReference type="Reactome" id="R-MMU-72689">
    <property type="pathway name" value="Formation of a pool of free 40S subunits"/>
</dbReference>
<dbReference type="Reactome" id="R-MMU-72706">
    <property type="pathway name" value="GTP hydrolysis and joining of the 60S ribosomal subunit"/>
</dbReference>
<dbReference type="Reactome" id="R-MMU-975956">
    <property type="pathway name" value="Nonsense Mediated Decay (NMD) independent of the Exon Junction Complex (EJC)"/>
</dbReference>
<dbReference type="Reactome" id="R-MMU-975957">
    <property type="pathway name" value="Nonsense Mediated Decay (NMD) enhanced by the Exon Junction Complex (EJC)"/>
</dbReference>
<dbReference type="BioGRID-ORCS" id="67186">
    <property type="hits" value="13 hits in 48 CRISPR screens"/>
</dbReference>
<dbReference type="CD-CODE" id="CE726F99">
    <property type="entry name" value="Postsynaptic density"/>
</dbReference>
<dbReference type="ChiTaRS" id="Rplp2">
    <property type="organism name" value="mouse"/>
</dbReference>
<dbReference type="PRO" id="PR:P99027"/>
<dbReference type="Proteomes" id="UP000000589">
    <property type="component" value="Chromosome 7"/>
</dbReference>
<dbReference type="RNAct" id="P99027">
    <property type="molecule type" value="protein"/>
</dbReference>
<dbReference type="Bgee" id="ENSMUSG00000025508">
    <property type="expression patterns" value="Expressed in embryonic cell in blastocyst and 72 other cell types or tissues"/>
</dbReference>
<dbReference type="GO" id="GO:0005737">
    <property type="term" value="C:cytoplasm"/>
    <property type="evidence" value="ECO:0000314"/>
    <property type="project" value="ComplexPortal"/>
</dbReference>
<dbReference type="GO" id="GO:0005829">
    <property type="term" value="C:cytosol"/>
    <property type="evidence" value="ECO:0000304"/>
    <property type="project" value="Reactome"/>
</dbReference>
<dbReference type="GO" id="GO:0022625">
    <property type="term" value="C:cytosolic large ribosomal subunit"/>
    <property type="evidence" value="ECO:0000353"/>
    <property type="project" value="ComplexPortal"/>
</dbReference>
<dbReference type="GO" id="GO:0098794">
    <property type="term" value="C:postsynapse"/>
    <property type="evidence" value="ECO:0000303"/>
    <property type="project" value="SynGO"/>
</dbReference>
<dbReference type="GO" id="GO:0098793">
    <property type="term" value="C:presynapse"/>
    <property type="evidence" value="ECO:0000303"/>
    <property type="project" value="SynGO"/>
</dbReference>
<dbReference type="GO" id="GO:0005840">
    <property type="term" value="C:ribosome"/>
    <property type="evidence" value="ECO:0000303"/>
    <property type="project" value="SynGO"/>
</dbReference>
<dbReference type="GO" id="GO:0045202">
    <property type="term" value="C:synapse"/>
    <property type="evidence" value="ECO:0000314"/>
    <property type="project" value="SynGO"/>
</dbReference>
<dbReference type="GO" id="GO:0003735">
    <property type="term" value="F:structural constituent of ribosome"/>
    <property type="evidence" value="ECO:0007669"/>
    <property type="project" value="InterPro"/>
</dbReference>
<dbReference type="GO" id="GO:0002181">
    <property type="term" value="P:cytoplasmic translation"/>
    <property type="evidence" value="ECO:0000303"/>
    <property type="project" value="ComplexPortal"/>
</dbReference>
<dbReference type="GO" id="GO:0002182">
    <property type="term" value="P:cytoplasmic translational elongation"/>
    <property type="evidence" value="ECO:0007669"/>
    <property type="project" value="InterPro"/>
</dbReference>
<dbReference type="GO" id="GO:0140242">
    <property type="term" value="P:translation at postsynapse"/>
    <property type="evidence" value="ECO:0000303"/>
    <property type="project" value="SynGO"/>
</dbReference>
<dbReference type="GO" id="GO:0140236">
    <property type="term" value="P:translation at presynapse"/>
    <property type="evidence" value="ECO:0000303"/>
    <property type="project" value="SynGO"/>
</dbReference>
<dbReference type="CDD" id="cd05833">
    <property type="entry name" value="Ribosomal_P2"/>
    <property type="match status" value="1"/>
</dbReference>
<dbReference type="FunFam" id="1.10.10.1410:FF:000002">
    <property type="entry name" value="60S acidic ribosomal protein P2"/>
    <property type="match status" value="1"/>
</dbReference>
<dbReference type="Gene3D" id="1.10.10.1410">
    <property type="match status" value="1"/>
</dbReference>
<dbReference type="HAMAP" id="MF_01478">
    <property type="entry name" value="Ribosomal_L12_arch"/>
    <property type="match status" value="1"/>
</dbReference>
<dbReference type="InterPro" id="IPR038716">
    <property type="entry name" value="P1/P2_N_sf"/>
</dbReference>
<dbReference type="InterPro" id="IPR027534">
    <property type="entry name" value="Ribosomal_P1/P2"/>
</dbReference>
<dbReference type="InterPro" id="IPR044076">
    <property type="entry name" value="Ribosomal_P2"/>
</dbReference>
<dbReference type="PANTHER" id="PTHR21141">
    <property type="entry name" value="60S ACIDIC RIBOSOMAL PROTEIN FAMILY MEMBER"/>
    <property type="match status" value="1"/>
</dbReference>
<dbReference type="PANTHER" id="PTHR21141:SF5">
    <property type="entry name" value="LARGE RIBOSOMAL SUBUNIT PROTEIN P2"/>
    <property type="match status" value="1"/>
</dbReference>
<dbReference type="Pfam" id="PF00428">
    <property type="entry name" value="Ribosomal_60s"/>
    <property type="match status" value="1"/>
</dbReference>
<keyword id="KW-0007">Acetylation</keyword>
<keyword id="KW-0903">Direct protein sequencing</keyword>
<keyword id="KW-0597">Phosphoprotein</keyword>
<keyword id="KW-1185">Reference proteome</keyword>
<keyword id="KW-0687">Ribonucleoprotein</keyword>
<keyword id="KW-0689">Ribosomal protein</keyword>
<comment type="function">
    <text>Plays an important role in the elongation step of protein synthesis.</text>
</comment>
<comment type="subunit">
    <text evidence="1">Heterodimer with RPLP1 at the lateral ribosomal stalk of the large ribosomal subunit.</text>
</comment>
<comment type="similarity">
    <text evidence="4">Belongs to the eukaryotic ribosomal protein P1/P2 family.</text>
</comment>
<feature type="chain" id="PRO_0000157641" description="Large ribosomal subunit protein P2">
    <location>
        <begin position="1"/>
        <end position="115"/>
    </location>
</feature>
<feature type="region of interest" description="Disordered" evidence="3">
    <location>
        <begin position="76"/>
        <end position="115"/>
    </location>
</feature>
<feature type="compositionally biased region" description="Low complexity" evidence="3">
    <location>
        <begin position="76"/>
        <end position="90"/>
    </location>
</feature>
<feature type="compositionally biased region" description="Basic and acidic residues" evidence="3">
    <location>
        <begin position="91"/>
        <end position="101"/>
    </location>
</feature>
<feature type="modified residue" description="N-acetylmethionine" evidence="2">
    <location>
        <position position="1"/>
    </location>
</feature>
<feature type="modified residue" description="Phosphoserine" evidence="7 9">
    <location>
        <position position="17"/>
    </location>
</feature>
<feature type="modified residue" description="Phosphoserine" evidence="2">
    <location>
        <position position="19"/>
    </location>
</feature>
<feature type="modified residue" description="N6-acetyllysine; alternate" evidence="10">
    <location>
        <position position="21"/>
    </location>
</feature>
<feature type="modified residue" description="N6-succinyllysine; alternate" evidence="10">
    <location>
        <position position="21"/>
    </location>
</feature>
<feature type="modified residue" description="Phosphoserine" evidence="2">
    <location>
        <position position="79"/>
    </location>
</feature>
<feature type="modified residue" description="Phosphoserine" evidence="9">
    <location>
        <position position="86"/>
    </location>
</feature>
<feature type="modified residue" description="Phosphoserine" evidence="5 6 7 8 9">
    <location>
        <position position="102"/>
    </location>
</feature>
<feature type="modified residue" description="Phosphoserine" evidence="5 6 7 8 9">
    <location>
        <position position="105"/>
    </location>
</feature>
<feature type="sequence conflict" description="In Ref. 1; BAB28297." evidence="4" ref="1">
    <original>S</original>
    <variation>N</variation>
    <location>
        <position position="19"/>
    </location>
</feature>
<feature type="sequence conflict" description="In Ref. 1; BAB28297." evidence="4" ref="1">
    <original>K</original>
    <variation>R</variation>
    <location>
        <position position="61"/>
    </location>
</feature>
<feature type="sequence conflict" description="In Ref. 1; BAB28297." evidence="4" ref="1">
    <original>A</original>
    <variation>T</variation>
    <location>
        <position position="81"/>
    </location>
</feature>
<organism>
    <name type="scientific">Mus musculus</name>
    <name type="common">Mouse</name>
    <dbReference type="NCBI Taxonomy" id="10090"/>
    <lineage>
        <taxon>Eukaryota</taxon>
        <taxon>Metazoa</taxon>
        <taxon>Chordata</taxon>
        <taxon>Craniata</taxon>
        <taxon>Vertebrata</taxon>
        <taxon>Euteleostomi</taxon>
        <taxon>Mammalia</taxon>
        <taxon>Eutheria</taxon>
        <taxon>Euarchontoglires</taxon>
        <taxon>Glires</taxon>
        <taxon>Rodentia</taxon>
        <taxon>Myomorpha</taxon>
        <taxon>Muroidea</taxon>
        <taxon>Muridae</taxon>
        <taxon>Murinae</taxon>
        <taxon>Mus</taxon>
        <taxon>Mus</taxon>
    </lineage>
</organism>
<sequence>MRYVASYLLAALGGNSSPSAKDIKKILDSVGIEADDDRLNKVISELNGKNIEDVIAQGVGKLASVPAGGAVAVSAAPGSAAPAAGSAPAAAEEKKDEKKEESEESDDDMGFGLFD</sequence>
<name>RLA2_MOUSE</name>